<reference key="1">
    <citation type="journal article" date="2000" name="Nature">
        <title>Complete genome sequence of Pseudomonas aeruginosa PAO1, an opportunistic pathogen.</title>
        <authorList>
            <person name="Stover C.K."/>
            <person name="Pham X.-Q.T."/>
            <person name="Erwin A.L."/>
            <person name="Mizoguchi S.D."/>
            <person name="Warrener P."/>
            <person name="Hickey M.J."/>
            <person name="Brinkman F.S.L."/>
            <person name="Hufnagle W.O."/>
            <person name="Kowalik D.J."/>
            <person name="Lagrou M."/>
            <person name="Garber R.L."/>
            <person name="Goltry L."/>
            <person name="Tolentino E."/>
            <person name="Westbrock-Wadman S."/>
            <person name="Yuan Y."/>
            <person name="Brody L.L."/>
            <person name="Coulter S.N."/>
            <person name="Folger K.R."/>
            <person name="Kas A."/>
            <person name="Larbig K."/>
            <person name="Lim R.M."/>
            <person name="Smith K.A."/>
            <person name="Spencer D.H."/>
            <person name="Wong G.K.-S."/>
            <person name="Wu Z."/>
            <person name="Paulsen I.T."/>
            <person name="Reizer J."/>
            <person name="Saier M.H. Jr."/>
            <person name="Hancock R.E.W."/>
            <person name="Lory S."/>
            <person name="Olson M.V."/>
        </authorList>
    </citation>
    <scope>NUCLEOTIDE SEQUENCE [LARGE SCALE GENOMIC DNA]</scope>
    <source>
        <strain>ATCC 15692 / DSM 22644 / CIP 104116 / JCM 14847 / LMG 12228 / 1C / PRS 101 / PAO1</strain>
    </source>
</reference>
<organism>
    <name type="scientific">Pseudomonas aeruginosa (strain ATCC 15692 / DSM 22644 / CIP 104116 / JCM 14847 / LMG 12228 / 1C / PRS 101 / PAO1)</name>
    <dbReference type="NCBI Taxonomy" id="208964"/>
    <lineage>
        <taxon>Bacteria</taxon>
        <taxon>Pseudomonadati</taxon>
        <taxon>Pseudomonadota</taxon>
        <taxon>Gammaproteobacteria</taxon>
        <taxon>Pseudomonadales</taxon>
        <taxon>Pseudomonadaceae</taxon>
        <taxon>Pseudomonas</taxon>
    </lineage>
</organism>
<protein>
    <recommendedName>
        <fullName evidence="1">ATP synthase subunit delta</fullName>
    </recommendedName>
    <alternativeName>
        <fullName evidence="1">ATP synthase F(1) sector subunit delta</fullName>
    </alternativeName>
    <alternativeName>
        <fullName evidence="1">F-type ATPase subunit delta</fullName>
        <shortName evidence="1">F-ATPase subunit delta</shortName>
    </alternativeName>
</protein>
<dbReference type="EMBL" id="AE004091">
    <property type="protein sequence ID" value="AAG08942.1"/>
    <property type="molecule type" value="Genomic_DNA"/>
</dbReference>
<dbReference type="PIR" id="F82952">
    <property type="entry name" value="F82952"/>
</dbReference>
<dbReference type="RefSeq" id="NP_254244.1">
    <property type="nucleotide sequence ID" value="NC_002516.2"/>
</dbReference>
<dbReference type="RefSeq" id="WP_003097135.1">
    <property type="nucleotide sequence ID" value="NZ_QZGE01000012.1"/>
</dbReference>
<dbReference type="SMR" id="Q9HT17"/>
<dbReference type="FunCoup" id="Q9HT17">
    <property type="interactions" value="484"/>
</dbReference>
<dbReference type="STRING" id="208964.PA5557"/>
<dbReference type="PaxDb" id="208964-PA5557"/>
<dbReference type="DNASU" id="878509"/>
<dbReference type="GeneID" id="878509"/>
<dbReference type="KEGG" id="pae:PA5557"/>
<dbReference type="PATRIC" id="fig|208964.12.peg.5823"/>
<dbReference type="PseudoCAP" id="PA5557"/>
<dbReference type="HOGENOM" id="CLU_085114_3_0_6"/>
<dbReference type="InParanoid" id="Q9HT17"/>
<dbReference type="OrthoDB" id="9816221at2"/>
<dbReference type="PhylomeDB" id="Q9HT17"/>
<dbReference type="BioCyc" id="PAER208964:G1FZ6-5684-MONOMER"/>
<dbReference type="Proteomes" id="UP000002438">
    <property type="component" value="Chromosome"/>
</dbReference>
<dbReference type="GO" id="GO:0005886">
    <property type="term" value="C:plasma membrane"/>
    <property type="evidence" value="ECO:0007669"/>
    <property type="project" value="UniProtKB-SubCell"/>
</dbReference>
<dbReference type="GO" id="GO:0045259">
    <property type="term" value="C:proton-transporting ATP synthase complex"/>
    <property type="evidence" value="ECO:0007669"/>
    <property type="project" value="UniProtKB-KW"/>
</dbReference>
<dbReference type="GO" id="GO:0046933">
    <property type="term" value="F:proton-transporting ATP synthase activity, rotational mechanism"/>
    <property type="evidence" value="ECO:0007669"/>
    <property type="project" value="UniProtKB-UniRule"/>
</dbReference>
<dbReference type="GO" id="GO:0015986">
    <property type="term" value="P:proton motive force-driven ATP synthesis"/>
    <property type="evidence" value="ECO:0000318"/>
    <property type="project" value="GO_Central"/>
</dbReference>
<dbReference type="Gene3D" id="1.10.520.20">
    <property type="entry name" value="N-terminal domain of the delta subunit of the F1F0-ATP synthase"/>
    <property type="match status" value="1"/>
</dbReference>
<dbReference type="HAMAP" id="MF_01416">
    <property type="entry name" value="ATP_synth_delta_bact"/>
    <property type="match status" value="1"/>
</dbReference>
<dbReference type="InterPro" id="IPR026015">
    <property type="entry name" value="ATP_synth_OSCP/delta_N_sf"/>
</dbReference>
<dbReference type="InterPro" id="IPR000711">
    <property type="entry name" value="ATPase_OSCP/dsu"/>
</dbReference>
<dbReference type="NCBIfam" id="TIGR01145">
    <property type="entry name" value="ATP_synt_delta"/>
    <property type="match status" value="1"/>
</dbReference>
<dbReference type="NCBIfam" id="NF004402">
    <property type="entry name" value="PRK05758.2-2"/>
    <property type="match status" value="1"/>
</dbReference>
<dbReference type="PANTHER" id="PTHR11910">
    <property type="entry name" value="ATP SYNTHASE DELTA CHAIN"/>
    <property type="match status" value="1"/>
</dbReference>
<dbReference type="Pfam" id="PF00213">
    <property type="entry name" value="OSCP"/>
    <property type="match status" value="1"/>
</dbReference>
<dbReference type="PRINTS" id="PR00125">
    <property type="entry name" value="ATPASEDELTA"/>
</dbReference>
<dbReference type="SUPFAM" id="SSF47928">
    <property type="entry name" value="N-terminal domain of the delta subunit of the F1F0-ATP synthase"/>
    <property type="match status" value="1"/>
</dbReference>
<sequence>MAELTTLARPYAKAAFEYAQAHQQLADWSAALGVLAAVSQDDTVRQLLKEPQLTSSAKAQSLIDVCGDKLNAPAQNFVRTVAENKRLELLPTIAEMYEQLKAEQEKSVEVEVTSAFTLSKEQQDKLAKALSARLSREVRLHASEDASLIGGVIIRAGDLVIDGSVRGKLAKLAEALKS</sequence>
<feature type="chain" id="PRO_0000287748" description="ATP synthase subunit delta">
    <location>
        <begin position="1"/>
        <end position="178"/>
    </location>
</feature>
<name>ATPD_PSEAE</name>
<gene>
    <name evidence="1" type="primary">atpH</name>
    <name type="ordered locus">PA5557</name>
</gene>
<keyword id="KW-0066">ATP synthesis</keyword>
<keyword id="KW-0997">Cell inner membrane</keyword>
<keyword id="KW-1003">Cell membrane</keyword>
<keyword id="KW-0139">CF(1)</keyword>
<keyword id="KW-0375">Hydrogen ion transport</keyword>
<keyword id="KW-0406">Ion transport</keyword>
<keyword id="KW-0472">Membrane</keyword>
<keyword id="KW-1185">Reference proteome</keyword>
<keyword id="KW-0813">Transport</keyword>
<proteinExistence type="inferred from homology"/>
<evidence type="ECO:0000255" key="1">
    <source>
        <dbReference type="HAMAP-Rule" id="MF_01416"/>
    </source>
</evidence>
<comment type="function">
    <text evidence="1">F(1)F(0) ATP synthase produces ATP from ADP in the presence of a proton or sodium gradient. F-type ATPases consist of two structural domains, F(1) containing the extramembraneous catalytic core and F(0) containing the membrane proton channel, linked together by a central stalk and a peripheral stalk. During catalysis, ATP synthesis in the catalytic domain of F(1) is coupled via a rotary mechanism of the central stalk subunits to proton translocation.</text>
</comment>
<comment type="function">
    <text evidence="1">This protein is part of the stalk that links CF(0) to CF(1). It either transmits conformational changes from CF(0) to CF(1) or is implicated in proton conduction.</text>
</comment>
<comment type="subunit">
    <text evidence="1">F-type ATPases have 2 components, F(1) - the catalytic core - and F(0) - the membrane proton channel. F(1) has five subunits: alpha(3), beta(3), gamma(1), delta(1), epsilon(1). F(0) has three main subunits: a(1), b(2) and c(10-14). The alpha and beta chains form an alternating ring which encloses part of the gamma chain. F(1) is attached to F(0) by a central stalk formed by the gamma and epsilon chains, while a peripheral stalk is formed by the delta and b chains.</text>
</comment>
<comment type="subcellular location">
    <subcellularLocation>
        <location evidence="1">Cell inner membrane</location>
        <topology evidence="1">Peripheral membrane protein</topology>
    </subcellularLocation>
</comment>
<comment type="similarity">
    <text evidence="1">Belongs to the ATPase delta chain family.</text>
</comment>
<accession>Q9HT17</accession>